<evidence type="ECO:0000255" key="1">
    <source>
        <dbReference type="HAMAP-Rule" id="MF_01345"/>
    </source>
</evidence>
<evidence type="ECO:0000305" key="2"/>
<comment type="function">
    <text evidence="1">One of the primary rRNA binding proteins, it binds specifically to the 5'-end of 16S ribosomal RNA.</text>
</comment>
<comment type="subunit">
    <text evidence="1">Part of the 30S ribosomal subunit.</text>
</comment>
<comment type="similarity">
    <text evidence="1">Belongs to the universal ribosomal protein uS17 family.</text>
</comment>
<name>RS17_VEREI</name>
<accession>A1WHD4</accession>
<feature type="chain" id="PRO_1000055045" description="Small ribosomal subunit protein uS17">
    <location>
        <begin position="1"/>
        <end position="89"/>
    </location>
</feature>
<protein>
    <recommendedName>
        <fullName evidence="1">Small ribosomal subunit protein uS17</fullName>
    </recommendedName>
    <alternativeName>
        <fullName evidence="2">30S ribosomal protein S17</fullName>
    </alternativeName>
</protein>
<reference key="1">
    <citation type="submission" date="2006-12" db="EMBL/GenBank/DDBJ databases">
        <title>Complete sequence of chromosome 1 of Verminephrobacter eiseniae EF01-2.</title>
        <authorList>
            <person name="Copeland A."/>
            <person name="Lucas S."/>
            <person name="Lapidus A."/>
            <person name="Barry K."/>
            <person name="Detter J.C."/>
            <person name="Glavina del Rio T."/>
            <person name="Dalin E."/>
            <person name="Tice H."/>
            <person name="Pitluck S."/>
            <person name="Chertkov O."/>
            <person name="Brettin T."/>
            <person name="Bruce D."/>
            <person name="Han C."/>
            <person name="Tapia R."/>
            <person name="Gilna P."/>
            <person name="Schmutz J."/>
            <person name="Larimer F."/>
            <person name="Land M."/>
            <person name="Hauser L."/>
            <person name="Kyrpides N."/>
            <person name="Kim E."/>
            <person name="Stahl D."/>
            <person name="Richardson P."/>
        </authorList>
    </citation>
    <scope>NUCLEOTIDE SEQUENCE [LARGE SCALE GENOMIC DNA]</scope>
    <source>
        <strain>EF01-2</strain>
    </source>
</reference>
<dbReference type="EMBL" id="CP000542">
    <property type="protein sequence ID" value="ABM57041.1"/>
    <property type="molecule type" value="Genomic_DNA"/>
</dbReference>
<dbReference type="RefSeq" id="WP_011809051.1">
    <property type="nucleotide sequence ID" value="NC_008786.1"/>
</dbReference>
<dbReference type="SMR" id="A1WHD4"/>
<dbReference type="STRING" id="391735.Veis_1273"/>
<dbReference type="GeneID" id="76459920"/>
<dbReference type="KEGG" id="vei:Veis_1273"/>
<dbReference type="eggNOG" id="COG0186">
    <property type="taxonomic scope" value="Bacteria"/>
</dbReference>
<dbReference type="HOGENOM" id="CLU_073626_1_1_4"/>
<dbReference type="OrthoDB" id="9811714at2"/>
<dbReference type="Proteomes" id="UP000000374">
    <property type="component" value="Chromosome"/>
</dbReference>
<dbReference type="GO" id="GO:0022627">
    <property type="term" value="C:cytosolic small ribosomal subunit"/>
    <property type="evidence" value="ECO:0007669"/>
    <property type="project" value="TreeGrafter"/>
</dbReference>
<dbReference type="GO" id="GO:0019843">
    <property type="term" value="F:rRNA binding"/>
    <property type="evidence" value="ECO:0007669"/>
    <property type="project" value="UniProtKB-UniRule"/>
</dbReference>
<dbReference type="GO" id="GO:0003735">
    <property type="term" value="F:structural constituent of ribosome"/>
    <property type="evidence" value="ECO:0007669"/>
    <property type="project" value="InterPro"/>
</dbReference>
<dbReference type="GO" id="GO:0006412">
    <property type="term" value="P:translation"/>
    <property type="evidence" value="ECO:0007669"/>
    <property type="project" value="UniProtKB-UniRule"/>
</dbReference>
<dbReference type="CDD" id="cd00364">
    <property type="entry name" value="Ribosomal_uS17"/>
    <property type="match status" value="1"/>
</dbReference>
<dbReference type="Gene3D" id="2.40.50.140">
    <property type="entry name" value="Nucleic acid-binding proteins"/>
    <property type="match status" value="1"/>
</dbReference>
<dbReference type="HAMAP" id="MF_01345_B">
    <property type="entry name" value="Ribosomal_uS17_B"/>
    <property type="match status" value="1"/>
</dbReference>
<dbReference type="InterPro" id="IPR012340">
    <property type="entry name" value="NA-bd_OB-fold"/>
</dbReference>
<dbReference type="InterPro" id="IPR000266">
    <property type="entry name" value="Ribosomal_uS17"/>
</dbReference>
<dbReference type="InterPro" id="IPR019984">
    <property type="entry name" value="Ribosomal_uS17_bact/chlr"/>
</dbReference>
<dbReference type="InterPro" id="IPR019979">
    <property type="entry name" value="Ribosomal_uS17_CS"/>
</dbReference>
<dbReference type="NCBIfam" id="NF004123">
    <property type="entry name" value="PRK05610.1"/>
    <property type="match status" value="1"/>
</dbReference>
<dbReference type="NCBIfam" id="TIGR03635">
    <property type="entry name" value="uS17_bact"/>
    <property type="match status" value="1"/>
</dbReference>
<dbReference type="PANTHER" id="PTHR10744">
    <property type="entry name" value="40S RIBOSOMAL PROTEIN S11 FAMILY MEMBER"/>
    <property type="match status" value="1"/>
</dbReference>
<dbReference type="PANTHER" id="PTHR10744:SF1">
    <property type="entry name" value="SMALL RIBOSOMAL SUBUNIT PROTEIN US17M"/>
    <property type="match status" value="1"/>
</dbReference>
<dbReference type="Pfam" id="PF00366">
    <property type="entry name" value="Ribosomal_S17"/>
    <property type="match status" value="1"/>
</dbReference>
<dbReference type="PRINTS" id="PR00973">
    <property type="entry name" value="RIBOSOMALS17"/>
</dbReference>
<dbReference type="SUPFAM" id="SSF50249">
    <property type="entry name" value="Nucleic acid-binding proteins"/>
    <property type="match status" value="1"/>
</dbReference>
<dbReference type="PROSITE" id="PS00056">
    <property type="entry name" value="RIBOSOMAL_S17"/>
    <property type="match status" value="1"/>
</dbReference>
<keyword id="KW-1185">Reference proteome</keyword>
<keyword id="KW-0687">Ribonucleoprotein</keyword>
<keyword id="KW-0689">Ribosomal protein</keyword>
<keyword id="KW-0694">RNA-binding</keyword>
<keyword id="KW-0699">rRNA-binding</keyword>
<proteinExistence type="inferred from homology"/>
<gene>
    <name evidence="1" type="primary">rpsQ</name>
    <name type="ordered locus">Veis_1273</name>
</gene>
<sequence>MTEAQKSLKRTLIGKVVSDKRQKTVTVLVERRVKHELYGKIIARSSKYHAHDEKGEYKLGDMIEITESRPLSKTKNWVASRLVQKAGLL</sequence>
<organism>
    <name type="scientific">Verminephrobacter eiseniae (strain EF01-2)</name>
    <dbReference type="NCBI Taxonomy" id="391735"/>
    <lineage>
        <taxon>Bacteria</taxon>
        <taxon>Pseudomonadati</taxon>
        <taxon>Pseudomonadota</taxon>
        <taxon>Betaproteobacteria</taxon>
        <taxon>Burkholderiales</taxon>
        <taxon>Comamonadaceae</taxon>
        <taxon>Verminephrobacter</taxon>
    </lineage>
</organism>